<protein>
    <recommendedName>
        <fullName evidence="2">Large ribosomal subunit protein uL11</fullName>
    </recommendedName>
    <alternativeName>
        <fullName>60S ribosomal protein L12</fullName>
    </alternativeName>
</protein>
<comment type="function">
    <text evidence="1">Component of the large ribosomal subunit. The ribosome is a large ribonucleoprotein complex responsible for the synthesis of proteins in the cell. Binds directly to 26S ribosomal RNA.</text>
</comment>
<comment type="subunit">
    <text evidence="1">Component of the large ribosomal subunit. Mature ribosomes consist of a small (40S) and a large (60S) subunit. The 40S subunit contains about 33 different proteins and 1 molecule of RNA (18S). The 60S subunit contains about 49 different proteins and 3 molecules of RNA (28S, 5.8S and 5S).</text>
</comment>
<comment type="subcellular location">
    <subcellularLocation>
        <location evidence="1">Cytoplasm</location>
    </subcellularLocation>
</comment>
<comment type="PTM">
    <text evidence="1">Ubiquitinated at Lys-48 and Lys-83 by RNF14 and RNF25 in response to ribosome collisions (ribosome stalling).</text>
</comment>
<comment type="similarity">
    <text evidence="2">Belongs to the universal ribosomal protein uL11 family.</text>
</comment>
<dbReference type="EMBL" id="L04280">
    <property type="protein sequence ID" value="AAA40066.1"/>
    <property type="molecule type" value="mRNA"/>
</dbReference>
<dbReference type="EMBL" id="AK002973">
    <property type="protein sequence ID" value="BAB22488.1"/>
    <property type="molecule type" value="mRNA"/>
</dbReference>
<dbReference type="EMBL" id="AK008347">
    <property type="protein sequence ID" value="BAB25619.1"/>
    <property type="molecule type" value="mRNA"/>
</dbReference>
<dbReference type="EMBL" id="AK012349">
    <property type="protein sequence ID" value="BAB28180.1"/>
    <property type="molecule type" value="mRNA"/>
</dbReference>
<dbReference type="EMBL" id="AK012428">
    <property type="protein sequence ID" value="BAB28232.1"/>
    <property type="molecule type" value="mRNA"/>
</dbReference>
<dbReference type="EMBL" id="BC018321">
    <property type="protein sequence ID" value="AAH18321.1"/>
    <property type="molecule type" value="mRNA"/>
</dbReference>
<dbReference type="EMBL" id="BC081469">
    <property type="protein sequence ID" value="AAH81469.1"/>
    <property type="molecule type" value="mRNA"/>
</dbReference>
<dbReference type="CCDS" id="CCDS15936.1"/>
<dbReference type="PIR" id="JN0778">
    <property type="entry name" value="JN0778"/>
</dbReference>
<dbReference type="RefSeq" id="NP_033102.2">
    <property type="nucleotide sequence ID" value="NM_009076.3"/>
</dbReference>
<dbReference type="PDB" id="1WIB">
    <property type="method" value="NMR"/>
    <property type="chains" value="A=2-79"/>
</dbReference>
<dbReference type="PDB" id="7LS1">
    <property type="method" value="EM"/>
    <property type="resolution" value="3.30 A"/>
    <property type="chains" value="k=1-165"/>
</dbReference>
<dbReference type="PDB" id="7LS2">
    <property type="method" value="EM"/>
    <property type="resolution" value="3.10 A"/>
    <property type="chains" value="k=1-165"/>
</dbReference>
<dbReference type="PDBsum" id="1WIB"/>
<dbReference type="PDBsum" id="7LS1"/>
<dbReference type="PDBsum" id="7LS2"/>
<dbReference type="EMDB" id="EMD-23500"/>
<dbReference type="EMDB" id="EMD-23501"/>
<dbReference type="SMR" id="P35979"/>
<dbReference type="BioGRID" id="234630">
    <property type="interactions" value="92"/>
</dbReference>
<dbReference type="ComplexPortal" id="CPX-5262">
    <property type="entry name" value="60S cytosolic large ribosomal subunit"/>
</dbReference>
<dbReference type="ComplexPortal" id="CPX-7662">
    <property type="entry name" value="60S cytosolic large ribosomal subunit, testis-specific variant"/>
</dbReference>
<dbReference type="ComplexPortal" id="CPX-7663">
    <property type="entry name" value="60S cytosolic large ribosomal subunit, striated muscle variant"/>
</dbReference>
<dbReference type="FunCoup" id="P35979">
    <property type="interactions" value="2068"/>
</dbReference>
<dbReference type="IntAct" id="P35979">
    <property type="interactions" value="4"/>
</dbReference>
<dbReference type="MINT" id="P35979"/>
<dbReference type="STRING" id="10090.ENSMUSP00000117461"/>
<dbReference type="GlyGen" id="P35979">
    <property type="glycosylation" value="2 sites, 1 N-linked glycan (1 site), 1 O-linked glycan (1 site)"/>
</dbReference>
<dbReference type="iPTMnet" id="P35979"/>
<dbReference type="PhosphoSitePlus" id="P35979"/>
<dbReference type="SwissPalm" id="P35979"/>
<dbReference type="jPOST" id="P35979"/>
<dbReference type="PaxDb" id="10090-ENSMUSP00000084807"/>
<dbReference type="PeptideAtlas" id="P35979"/>
<dbReference type="ProteomicsDB" id="255156"/>
<dbReference type="Pumba" id="P35979"/>
<dbReference type="DNASU" id="269261"/>
<dbReference type="Ensembl" id="ENSMUST00000126610.2">
    <property type="protein sequence ID" value="ENSMUSP00000117461.2"/>
    <property type="gene ID" value="ENSMUSG00000038900.18"/>
</dbReference>
<dbReference type="GeneID" id="269261"/>
<dbReference type="KEGG" id="mmu:269261"/>
<dbReference type="UCSC" id="uc008jhe.2">
    <property type="organism name" value="mouse"/>
</dbReference>
<dbReference type="AGR" id="MGI:98002"/>
<dbReference type="CTD" id="6136"/>
<dbReference type="MGI" id="MGI:98002">
    <property type="gene designation" value="Rpl12"/>
</dbReference>
<dbReference type="VEuPathDB" id="HostDB:ENSMUSG00000038900"/>
<dbReference type="eggNOG" id="KOG0886">
    <property type="taxonomic scope" value="Eukaryota"/>
</dbReference>
<dbReference type="GeneTree" id="ENSGT00390000006922"/>
<dbReference type="HOGENOM" id="CLU_074237_5_0_1"/>
<dbReference type="InParanoid" id="P35979"/>
<dbReference type="OMA" id="QPPHDVI"/>
<dbReference type="OrthoDB" id="9550325at2759"/>
<dbReference type="PhylomeDB" id="P35979"/>
<dbReference type="TreeFam" id="TF300123"/>
<dbReference type="Reactome" id="R-MMU-156827">
    <property type="pathway name" value="L13a-mediated translational silencing of Ceruloplasmin expression"/>
</dbReference>
<dbReference type="Reactome" id="R-MMU-1799339">
    <property type="pathway name" value="SRP-dependent cotranslational protein targeting to membrane"/>
</dbReference>
<dbReference type="Reactome" id="R-MMU-6791226">
    <property type="pathway name" value="Major pathway of rRNA processing in the nucleolus and cytosol"/>
</dbReference>
<dbReference type="Reactome" id="R-MMU-72689">
    <property type="pathway name" value="Formation of a pool of free 40S subunits"/>
</dbReference>
<dbReference type="Reactome" id="R-MMU-72706">
    <property type="pathway name" value="GTP hydrolysis and joining of the 60S ribosomal subunit"/>
</dbReference>
<dbReference type="Reactome" id="R-MMU-975956">
    <property type="pathway name" value="Nonsense Mediated Decay (NMD) independent of the Exon Junction Complex (EJC)"/>
</dbReference>
<dbReference type="Reactome" id="R-MMU-975957">
    <property type="pathway name" value="Nonsense Mediated Decay (NMD) enhanced by the Exon Junction Complex (EJC)"/>
</dbReference>
<dbReference type="BioGRID-ORCS" id="269261">
    <property type="hits" value="25 hits in 78 CRISPR screens"/>
</dbReference>
<dbReference type="CD-CODE" id="62836ADF">
    <property type="entry name" value="WNK body"/>
</dbReference>
<dbReference type="CD-CODE" id="CE726F99">
    <property type="entry name" value="Postsynaptic density"/>
</dbReference>
<dbReference type="ChiTaRS" id="Rpl12">
    <property type="organism name" value="mouse"/>
</dbReference>
<dbReference type="EvolutionaryTrace" id="P35979"/>
<dbReference type="PRO" id="PR:P35979"/>
<dbReference type="Proteomes" id="UP000000589">
    <property type="component" value="Chromosome 2"/>
</dbReference>
<dbReference type="RNAct" id="P35979">
    <property type="molecule type" value="protein"/>
</dbReference>
<dbReference type="Bgee" id="ENSMUSG00000038900">
    <property type="expression patterns" value="Expressed in epiblast (generic) and 66 other cell types or tissues"/>
</dbReference>
<dbReference type="ExpressionAtlas" id="P35979">
    <property type="expression patterns" value="baseline and differential"/>
</dbReference>
<dbReference type="GO" id="GO:0005737">
    <property type="term" value="C:cytoplasm"/>
    <property type="evidence" value="ECO:0000314"/>
    <property type="project" value="MGI"/>
</dbReference>
<dbReference type="GO" id="GO:0005829">
    <property type="term" value="C:cytosol"/>
    <property type="evidence" value="ECO:0000304"/>
    <property type="project" value="Reactome"/>
</dbReference>
<dbReference type="GO" id="GO:0022625">
    <property type="term" value="C:cytosolic large ribosomal subunit"/>
    <property type="evidence" value="ECO:0000353"/>
    <property type="project" value="ComplexPortal"/>
</dbReference>
<dbReference type="GO" id="GO:0005730">
    <property type="term" value="C:nucleolus"/>
    <property type="evidence" value="ECO:0000314"/>
    <property type="project" value="MGI"/>
</dbReference>
<dbReference type="GO" id="GO:0005634">
    <property type="term" value="C:nucleus"/>
    <property type="evidence" value="ECO:0000314"/>
    <property type="project" value="MGI"/>
</dbReference>
<dbReference type="GO" id="GO:0098794">
    <property type="term" value="C:postsynapse"/>
    <property type="evidence" value="ECO:0000303"/>
    <property type="project" value="SynGO"/>
</dbReference>
<dbReference type="GO" id="GO:0098793">
    <property type="term" value="C:presynapse"/>
    <property type="evidence" value="ECO:0000303"/>
    <property type="project" value="SynGO"/>
</dbReference>
<dbReference type="GO" id="GO:0005840">
    <property type="term" value="C:ribosome"/>
    <property type="evidence" value="ECO:0000303"/>
    <property type="project" value="SynGO"/>
</dbReference>
<dbReference type="GO" id="GO:0045202">
    <property type="term" value="C:synapse"/>
    <property type="evidence" value="ECO:0000314"/>
    <property type="project" value="SynGO"/>
</dbReference>
<dbReference type="GO" id="GO:0003723">
    <property type="term" value="F:RNA binding"/>
    <property type="evidence" value="ECO:0007669"/>
    <property type="project" value="UniProtKB-KW"/>
</dbReference>
<dbReference type="GO" id="GO:0003735">
    <property type="term" value="F:structural constituent of ribosome"/>
    <property type="evidence" value="ECO:0007669"/>
    <property type="project" value="InterPro"/>
</dbReference>
<dbReference type="GO" id="GO:0002181">
    <property type="term" value="P:cytoplasmic translation"/>
    <property type="evidence" value="ECO:0000303"/>
    <property type="project" value="ComplexPortal"/>
</dbReference>
<dbReference type="GO" id="GO:0140242">
    <property type="term" value="P:translation at postsynapse"/>
    <property type="evidence" value="ECO:0000303"/>
    <property type="project" value="SynGO"/>
</dbReference>
<dbReference type="GO" id="GO:0140236">
    <property type="term" value="P:translation at presynapse"/>
    <property type="evidence" value="ECO:0000303"/>
    <property type="project" value="SynGO"/>
</dbReference>
<dbReference type="CDD" id="cd00349">
    <property type="entry name" value="Ribosomal_L11"/>
    <property type="match status" value="1"/>
</dbReference>
<dbReference type="FunFam" id="1.10.10.250:FF:000002">
    <property type="entry name" value="60S ribosomal protein L12"/>
    <property type="match status" value="1"/>
</dbReference>
<dbReference type="FunFam" id="3.30.1550.10:FF:000002">
    <property type="entry name" value="60S ribosomal protein L12"/>
    <property type="match status" value="1"/>
</dbReference>
<dbReference type="Gene3D" id="1.10.10.250">
    <property type="entry name" value="Ribosomal protein L11, C-terminal domain"/>
    <property type="match status" value="1"/>
</dbReference>
<dbReference type="Gene3D" id="3.30.1550.10">
    <property type="entry name" value="Ribosomal protein L11/L12, N-terminal domain"/>
    <property type="match status" value="1"/>
</dbReference>
<dbReference type="HAMAP" id="MF_00736">
    <property type="entry name" value="Ribosomal_uL11"/>
    <property type="match status" value="1"/>
</dbReference>
<dbReference type="InterPro" id="IPR000911">
    <property type="entry name" value="Ribosomal_uL11"/>
</dbReference>
<dbReference type="InterPro" id="IPR020783">
    <property type="entry name" value="Ribosomal_uL11_C"/>
</dbReference>
<dbReference type="InterPro" id="IPR036769">
    <property type="entry name" value="Ribosomal_uL11_C_sf"/>
</dbReference>
<dbReference type="InterPro" id="IPR020785">
    <property type="entry name" value="Ribosomal_uL11_CS"/>
</dbReference>
<dbReference type="InterPro" id="IPR020784">
    <property type="entry name" value="Ribosomal_uL11_N"/>
</dbReference>
<dbReference type="InterPro" id="IPR036796">
    <property type="entry name" value="Ribosomal_uL11_N_sf"/>
</dbReference>
<dbReference type="PANTHER" id="PTHR11661">
    <property type="entry name" value="60S RIBOSOMAL PROTEIN L12"/>
    <property type="match status" value="1"/>
</dbReference>
<dbReference type="PANTHER" id="PTHR11661:SF2">
    <property type="entry name" value="LARGE RIBOSOMAL SUBUNIT PROTEIN UL11"/>
    <property type="match status" value="1"/>
</dbReference>
<dbReference type="Pfam" id="PF00298">
    <property type="entry name" value="Ribosomal_L11"/>
    <property type="match status" value="1"/>
</dbReference>
<dbReference type="Pfam" id="PF03946">
    <property type="entry name" value="Ribosomal_L11_N"/>
    <property type="match status" value="1"/>
</dbReference>
<dbReference type="SMART" id="SM00649">
    <property type="entry name" value="RL11"/>
    <property type="match status" value="1"/>
</dbReference>
<dbReference type="SUPFAM" id="SSF54747">
    <property type="entry name" value="Ribosomal L11/L12e N-terminal domain"/>
    <property type="match status" value="1"/>
</dbReference>
<dbReference type="SUPFAM" id="SSF46906">
    <property type="entry name" value="Ribosomal protein L11, C-terminal domain"/>
    <property type="match status" value="1"/>
</dbReference>
<dbReference type="PROSITE" id="PS00359">
    <property type="entry name" value="RIBOSOMAL_L11"/>
    <property type="match status" value="1"/>
</dbReference>
<accession>P35979</accession>
<accession>Q9CQK4</accession>
<keyword id="KW-0002">3D-structure</keyword>
<keyword id="KW-0007">Acetylation</keyword>
<keyword id="KW-0963">Cytoplasm</keyword>
<keyword id="KW-1017">Isopeptide bond</keyword>
<keyword id="KW-0597">Phosphoprotein</keyword>
<keyword id="KW-1185">Reference proteome</keyword>
<keyword id="KW-0687">Ribonucleoprotein</keyword>
<keyword id="KW-0689">Ribosomal protein</keyword>
<keyword id="KW-0694">RNA-binding</keyword>
<keyword id="KW-0832">Ubl conjugation</keyword>
<proteinExistence type="evidence at protein level"/>
<sequence length="165" mass="17805">MPPKFDPNEVKVVYLRCTGGEVGATSALAPKIGPLGLSPKKVGDDIAKATGDWKGLRITVKLTIQNRQAQIEVVPSASALIIKALKEPPRDRKKQKNIKHSGNITFDEIVNIARQMRHRSLARELSGTIKEILGTAQSVGCNVDGRHPHDIIDDINSGAVECPAS</sequence>
<feature type="chain" id="PRO_0000104457" description="Large ribosomal subunit protein uL11">
    <location>
        <begin position="1"/>
        <end position="165"/>
    </location>
</feature>
<feature type="modified residue" description="Phosphoserine" evidence="3">
    <location>
        <position position="38"/>
    </location>
</feature>
<feature type="modified residue" description="N6-acetyllysine" evidence="1">
    <location>
        <position position="54"/>
    </location>
</feature>
<feature type="modified residue" description="Phosphoserine" evidence="1">
    <location>
        <position position="165"/>
    </location>
</feature>
<feature type="cross-link" description="Glycyl lysine isopeptide (Lys-Gly) (interchain with G-Cter in SUMO2)" evidence="1">
    <location>
        <position position="40"/>
    </location>
</feature>
<feature type="cross-link" description="Glycyl lysine isopeptide (Lys-Gly) (interchain with G-Cter in ubiquitin)" evidence="1">
    <location>
        <position position="48"/>
    </location>
</feature>
<feature type="cross-link" description="Glycyl lysine isopeptide (Lys-Gly) (interchain with G-Cter in ubiquitin)" evidence="1">
    <location>
        <position position="83"/>
    </location>
</feature>
<feature type="sequence conflict" description="In Ref. 1; AAA40066." evidence="2" ref="1">
    <original>A</original>
    <variation>G</variation>
    <location>
        <position position="79"/>
    </location>
</feature>
<feature type="strand" evidence="4">
    <location>
        <begin position="7"/>
        <end position="9"/>
    </location>
</feature>
<feature type="strand" evidence="4">
    <location>
        <begin position="11"/>
        <end position="18"/>
    </location>
</feature>
<feature type="helix" evidence="4">
    <location>
        <begin position="29"/>
        <end position="32"/>
    </location>
</feature>
<feature type="turn" evidence="4">
    <location>
        <begin position="33"/>
        <end position="35"/>
    </location>
</feature>
<feature type="helix" evidence="4">
    <location>
        <begin position="39"/>
        <end position="49"/>
    </location>
</feature>
<feature type="turn" evidence="4">
    <location>
        <begin position="50"/>
        <end position="55"/>
    </location>
</feature>
<feature type="strand" evidence="4">
    <location>
        <begin position="56"/>
        <end position="65"/>
    </location>
</feature>
<feature type="strand" evidence="4">
    <location>
        <begin position="68"/>
        <end position="70"/>
    </location>
</feature>
<organism>
    <name type="scientific">Mus musculus</name>
    <name type="common">Mouse</name>
    <dbReference type="NCBI Taxonomy" id="10090"/>
    <lineage>
        <taxon>Eukaryota</taxon>
        <taxon>Metazoa</taxon>
        <taxon>Chordata</taxon>
        <taxon>Craniata</taxon>
        <taxon>Vertebrata</taxon>
        <taxon>Euteleostomi</taxon>
        <taxon>Mammalia</taxon>
        <taxon>Eutheria</taxon>
        <taxon>Euarchontoglires</taxon>
        <taxon>Glires</taxon>
        <taxon>Rodentia</taxon>
        <taxon>Myomorpha</taxon>
        <taxon>Muroidea</taxon>
        <taxon>Muridae</taxon>
        <taxon>Murinae</taxon>
        <taxon>Mus</taxon>
        <taxon>Mus</taxon>
    </lineage>
</organism>
<reference key="1">
    <citation type="journal article" date="1993" name="Gene">
        <title>Sequence analysis of mouse cDNAs encoding ribosomal proteins L12 and L18.</title>
        <authorList>
            <person name="Hou E.W."/>
            <person name="Li S.S.L."/>
        </authorList>
    </citation>
    <scope>NUCLEOTIDE SEQUENCE [MRNA]</scope>
    <source>
        <strain>C57BL/6 X CBA</strain>
        <tissue>Lung</tissue>
    </source>
</reference>
<reference key="2">
    <citation type="journal article" date="2005" name="Science">
        <title>The transcriptional landscape of the mammalian genome.</title>
        <authorList>
            <person name="Carninci P."/>
            <person name="Kasukawa T."/>
            <person name="Katayama S."/>
            <person name="Gough J."/>
            <person name="Frith M.C."/>
            <person name="Maeda N."/>
            <person name="Oyama R."/>
            <person name="Ravasi T."/>
            <person name="Lenhard B."/>
            <person name="Wells C."/>
            <person name="Kodzius R."/>
            <person name="Shimokawa K."/>
            <person name="Bajic V.B."/>
            <person name="Brenner S.E."/>
            <person name="Batalov S."/>
            <person name="Forrest A.R."/>
            <person name="Zavolan M."/>
            <person name="Davis M.J."/>
            <person name="Wilming L.G."/>
            <person name="Aidinis V."/>
            <person name="Allen J.E."/>
            <person name="Ambesi-Impiombato A."/>
            <person name="Apweiler R."/>
            <person name="Aturaliya R.N."/>
            <person name="Bailey T.L."/>
            <person name="Bansal M."/>
            <person name="Baxter L."/>
            <person name="Beisel K.W."/>
            <person name="Bersano T."/>
            <person name="Bono H."/>
            <person name="Chalk A.M."/>
            <person name="Chiu K.P."/>
            <person name="Choudhary V."/>
            <person name="Christoffels A."/>
            <person name="Clutterbuck D.R."/>
            <person name="Crowe M.L."/>
            <person name="Dalla E."/>
            <person name="Dalrymple B.P."/>
            <person name="de Bono B."/>
            <person name="Della Gatta G."/>
            <person name="di Bernardo D."/>
            <person name="Down T."/>
            <person name="Engstrom P."/>
            <person name="Fagiolini M."/>
            <person name="Faulkner G."/>
            <person name="Fletcher C.F."/>
            <person name="Fukushima T."/>
            <person name="Furuno M."/>
            <person name="Futaki S."/>
            <person name="Gariboldi M."/>
            <person name="Georgii-Hemming P."/>
            <person name="Gingeras T.R."/>
            <person name="Gojobori T."/>
            <person name="Green R.E."/>
            <person name="Gustincich S."/>
            <person name="Harbers M."/>
            <person name="Hayashi Y."/>
            <person name="Hensch T.K."/>
            <person name="Hirokawa N."/>
            <person name="Hill D."/>
            <person name="Huminiecki L."/>
            <person name="Iacono M."/>
            <person name="Ikeo K."/>
            <person name="Iwama A."/>
            <person name="Ishikawa T."/>
            <person name="Jakt M."/>
            <person name="Kanapin A."/>
            <person name="Katoh M."/>
            <person name="Kawasawa Y."/>
            <person name="Kelso J."/>
            <person name="Kitamura H."/>
            <person name="Kitano H."/>
            <person name="Kollias G."/>
            <person name="Krishnan S.P."/>
            <person name="Kruger A."/>
            <person name="Kummerfeld S.K."/>
            <person name="Kurochkin I.V."/>
            <person name="Lareau L.F."/>
            <person name="Lazarevic D."/>
            <person name="Lipovich L."/>
            <person name="Liu J."/>
            <person name="Liuni S."/>
            <person name="McWilliam S."/>
            <person name="Madan Babu M."/>
            <person name="Madera M."/>
            <person name="Marchionni L."/>
            <person name="Matsuda H."/>
            <person name="Matsuzawa S."/>
            <person name="Miki H."/>
            <person name="Mignone F."/>
            <person name="Miyake S."/>
            <person name="Morris K."/>
            <person name="Mottagui-Tabar S."/>
            <person name="Mulder N."/>
            <person name="Nakano N."/>
            <person name="Nakauchi H."/>
            <person name="Ng P."/>
            <person name="Nilsson R."/>
            <person name="Nishiguchi S."/>
            <person name="Nishikawa S."/>
            <person name="Nori F."/>
            <person name="Ohara O."/>
            <person name="Okazaki Y."/>
            <person name="Orlando V."/>
            <person name="Pang K.C."/>
            <person name="Pavan W.J."/>
            <person name="Pavesi G."/>
            <person name="Pesole G."/>
            <person name="Petrovsky N."/>
            <person name="Piazza S."/>
            <person name="Reed J."/>
            <person name="Reid J.F."/>
            <person name="Ring B.Z."/>
            <person name="Ringwald M."/>
            <person name="Rost B."/>
            <person name="Ruan Y."/>
            <person name="Salzberg S.L."/>
            <person name="Sandelin A."/>
            <person name="Schneider C."/>
            <person name="Schoenbach C."/>
            <person name="Sekiguchi K."/>
            <person name="Semple C.A."/>
            <person name="Seno S."/>
            <person name="Sessa L."/>
            <person name="Sheng Y."/>
            <person name="Shibata Y."/>
            <person name="Shimada H."/>
            <person name="Shimada K."/>
            <person name="Silva D."/>
            <person name="Sinclair B."/>
            <person name="Sperling S."/>
            <person name="Stupka E."/>
            <person name="Sugiura K."/>
            <person name="Sultana R."/>
            <person name="Takenaka Y."/>
            <person name="Taki K."/>
            <person name="Tammoja K."/>
            <person name="Tan S.L."/>
            <person name="Tang S."/>
            <person name="Taylor M.S."/>
            <person name="Tegner J."/>
            <person name="Teichmann S.A."/>
            <person name="Ueda H.R."/>
            <person name="van Nimwegen E."/>
            <person name="Verardo R."/>
            <person name="Wei C.L."/>
            <person name="Yagi K."/>
            <person name="Yamanishi H."/>
            <person name="Zabarovsky E."/>
            <person name="Zhu S."/>
            <person name="Zimmer A."/>
            <person name="Hide W."/>
            <person name="Bult C."/>
            <person name="Grimmond S.M."/>
            <person name="Teasdale R.D."/>
            <person name="Liu E.T."/>
            <person name="Brusic V."/>
            <person name="Quackenbush J."/>
            <person name="Wahlestedt C."/>
            <person name="Mattick J.S."/>
            <person name="Hume D.A."/>
            <person name="Kai C."/>
            <person name="Sasaki D."/>
            <person name="Tomaru Y."/>
            <person name="Fukuda S."/>
            <person name="Kanamori-Katayama M."/>
            <person name="Suzuki M."/>
            <person name="Aoki J."/>
            <person name="Arakawa T."/>
            <person name="Iida J."/>
            <person name="Imamura K."/>
            <person name="Itoh M."/>
            <person name="Kato T."/>
            <person name="Kawaji H."/>
            <person name="Kawagashira N."/>
            <person name="Kawashima T."/>
            <person name="Kojima M."/>
            <person name="Kondo S."/>
            <person name="Konno H."/>
            <person name="Nakano K."/>
            <person name="Ninomiya N."/>
            <person name="Nishio T."/>
            <person name="Okada M."/>
            <person name="Plessy C."/>
            <person name="Shibata K."/>
            <person name="Shiraki T."/>
            <person name="Suzuki S."/>
            <person name="Tagami M."/>
            <person name="Waki K."/>
            <person name="Watahiki A."/>
            <person name="Okamura-Oho Y."/>
            <person name="Suzuki H."/>
            <person name="Kawai J."/>
            <person name="Hayashizaki Y."/>
        </authorList>
    </citation>
    <scope>NUCLEOTIDE SEQUENCE [LARGE SCALE MRNA]</scope>
    <source>
        <strain>C57BL/6J</strain>
        <tissue>Brain</tissue>
        <tissue>Embryo</tissue>
        <tissue>Small intestine</tissue>
    </source>
</reference>
<reference key="3">
    <citation type="journal article" date="2004" name="Genome Res.">
        <title>The status, quality, and expansion of the NIH full-length cDNA project: the Mammalian Gene Collection (MGC).</title>
        <authorList>
            <consortium name="The MGC Project Team"/>
        </authorList>
    </citation>
    <scope>NUCLEOTIDE SEQUENCE [LARGE SCALE MRNA]</scope>
    <source>
        <strain>C57BL/6J</strain>
        <tissue>Brain</tissue>
        <tissue>Mammary gland</tissue>
    </source>
</reference>
<reference key="4">
    <citation type="journal article" date="2009" name="Mol. Cell. Proteomics">
        <title>Large scale localization of protein phosphorylation by use of electron capture dissociation mass spectrometry.</title>
        <authorList>
            <person name="Sweet S.M."/>
            <person name="Bailey C.M."/>
            <person name="Cunningham D.L."/>
            <person name="Heath J.K."/>
            <person name="Cooper H.J."/>
        </authorList>
    </citation>
    <scope>IDENTIFICATION BY MASS SPECTROMETRY [LARGE SCALE ANALYSIS]</scope>
    <source>
        <tissue>Embryonic fibroblast</tissue>
    </source>
</reference>
<reference key="5">
    <citation type="journal article" date="2010" name="Cell">
        <title>A tissue-specific atlas of mouse protein phosphorylation and expression.</title>
        <authorList>
            <person name="Huttlin E.L."/>
            <person name="Jedrychowski M.P."/>
            <person name="Elias J.E."/>
            <person name="Goswami T."/>
            <person name="Rad R."/>
            <person name="Beausoleil S.A."/>
            <person name="Villen J."/>
            <person name="Haas W."/>
            <person name="Sowa M.E."/>
            <person name="Gygi S.P."/>
        </authorList>
    </citation>
    <scope>PHOSPHORYLATION [LARGE SCALE ANALYSIS] AT SER-38</scope>
    <scope>IDENTIFICATION BY MASS SPECTROMETRY [LARGE SCALE ANALYSIS]</scope>
    <source>
        <tissue>Brain</tissue>
        <tissue>Brown adipose tissue</tissue>
        <tissue>Heart</tissue>
        <tissue>Kidney</tissue>
        <tissue>Liver</tissue>
        <tissue>Lung</tissue>
        <tissue>Pancreas</tissue>
        <tissue>Spleen</tissue>
        <tissue>Testis</tissue>
    </source>
</reference>
<reference key="6">
    <citation type="submission" date="2004-11" db="PDB data bank">
        <title>Solution structure of the N-terminal domain from mouse hypothetical protein BAB22488.</title>
        <authorList>
            <consortium name="RIKEN structural genomics initiative (RSGI)"/>
        </authorList>
    </citation>
    <scope>STRUCTURE BY NMR OF 2-80</scope>
</reference>
<name>RL12_MOUSE</name>
<evidence type="ECO:0000250" key="1">
    <source>
        <dbReference type="UniProtKB" id="P30050"/>
    </source>
</evidence>
<evidence type="ECO:0000305" key="2"/>
<evidence type="ECO:0007744" key="3">
    <source>
    </source>
</evidence>
<evidence type="ECO:0007829" key="4">
    <source>
        <dbReference type="PDB" id="1WIB"/>
    </source>
</evidence>
<gene>
    <name type="primary">Rpl12</name>
</gene>